<proteinExistence type="inferred from homology"/>
<accession>B0Z4P5</accession>
<comment type="function">
    <text evidence="1">Component of the cytochrome b6-f complex, which mediates electron transfer between photosystem II (PSII) and photosystem I (PSI), cyclic electron flow around PSI, and state transitions. PetG is required for either the stability or assembly of the cytochrome b6-f complex.</text>
</comment>
<comment type="subunit">
    <text evidence="1">The 4 large subunits of the cytochrome b6-f complex are cytochrome b6, subunit IV (17 kDa polypeptide, PetD), cytochrome f and the Rieske protein, while the 4 small subunits are PetG, PetL, PetM and PetN. The complex functions as a dimer.</text>
</comment>
<comment type="subcellular location">
    <subcellularLocation>
        <location evidence="1">Plastid</location>
        <location evidence="1">Chloroplast thylakoid membrane</location>
        <topology evidence="1">Single-pass membrane protein</topology>
    </subcellularLocation>
</comment>
<comment type="similarity">
    <text evidence="1">Belongs to the PetG family.</text>
</comment>
<reference key="1">
    <citation type="journal article" date="2008" name="Nucleic Acids Res.">
        <title>The complete nucleotide sequences of the five genetically distinct plastid genomes of Oenothera, subsection Oenothera: I. Sequence evaluation and plastome evolution.</title>
        <authorList>
            <person name="Greiner S."/>
            <person name="Wang X."/>
            <person name="Rauwolf U."/>
            <person name="Silber M.V."/>
            <person name="Mayer K."/>
            <person name="Meurer J."/>
            <person name="Haberer G."/>
            <person name="Herrmann R.G."/>
        </authorList>
    </citation>
    <scope>NUCLEOTIDE SEQUENCE [LARGE SCALE GENOMIC DNA]</scope>
    <source>
        <strain>cv. Douthat 1</strain>
    </source>
</reference>
<gene>
    <name evidence="1" type="primary">petG</name>
</gene>
<protein>
    <recommendedName>
        <fullName evidence="1">Cytochrome b6-f complex subunit 5</fullName>
    </recommendedName>
    <alternativeName>
        <fullName evidence="1">Cytochrome b6-f complex subunit PetG</fullName>
    </alternativeName>
    <alternativeName>
        <fullName evidence="1">Cytochrome b6-f complex subunit V</fullName>
    </alternativeName>
</protein>
<feature type="chain" id="PRO_0000355402" description="Cytochrome b6-f complex subunit 5">
    <location>
        <begin position="1"/>
        <end position="37"/>
    </location>
</feature>
<feature type="transmembrane region" description="Helical" evidence="1">
    <location>
        <begin position="5"/>
        <end position="25"/>
    </location>
</feature>
<dbReference type="EMBL" id="EU262887">
    <property type="protein sequence ID" value="ABW98723.1"/>
    <property type="molecule type" value="Genomic_DNA"/>
</dbReference>
<dbReference type="RefSeq" id="YP_001687156.1">
    <property type="nucleotide sequence ID" value="NC_010358.2"/>
</dbReference>
<dbReference type="SMR" id="B0Z4P5"/>
<dbReference type="GeneID" id="5951911"/>
<dbReference type="GO" id="GO:0009535">
    <property type="term" value="C:chloroplast thylakoid membrane"/>
    <property type="evidence" value="ECO:0007669"/>
    <property type="project" value="UniProtKB-SubCell"/>
</dbReference>
<dbReference type="GO" id="GO:0009512">
    <property type="term" value="C:cytochrome b6f complex"/>
    <property type="evidence" value="ECO:0007669"/>
    <property type="project" value="InterPro"/>
</dbReference>
<dbReference type="GO" id="GO:0045158">
    <property type="term" value="F:electron transporter, transferring electrons within cytochrome b6/f complex of photosystem II activity"/>
    <property type="evidence" value="ECO:0007669"/>
    <property type="project" value="UniProtKB-UniRule"/>
</dbReference>
<dbReference type="GO" id="GO:0017004">
    <property type="term" value="P:cytochrome complex assembly"/>
    <property type="evidence" value="ECO:0007669"/>
    <property type="project" value="UniProtKB-UniRule"/>
</dbReference>
<dbReference type="GO" id="GO:0015979">
    <property type="term" value="P:photosynthesis"/>
    <property type="evidence" value="ECO:0007669"/>
    <property type="project" value="UniProtKB-KW"/>
</dbReference>
<dbReference type="HAMAP" id="MF_00432">
    <property type="entry name" value="Cytb6_f_PetG"/>
    <property type="match status" value="1"/>
</dbReference>
<dbReference type="InterPro" id="IPR003683">
    <property type="entry name" value="Cyt_6/f_cplx_su5"/>
</dbReference>
<dbReference type="InterPro" id="IPR036099">
    <property type="entry name" value="Cyt_6/f_cplx_su5_sf"/>
</dbReference>
<dbReference type="NCBIfam" id="NF001907">
    <property type="entry name" value="PRK00665.1"/>
    <property type="match status" value="1"/>
</dbReference>
<dbReference type="Pfam" id="PF02529">
    <property type="entry name" value="PetG"/>
    <property type="match status" value="1"/>
</dbReference>
<dbReference type="PIRSF" id="PIRSF000034">
    <property type="entry name" value="Cyt_b6-f_V"/>
    <property type="match status" value="1"/>
</dbReference>
<dbReference type="SUPFAM" id="SSF103446">
    <property type="entry name" value="PetG subunit of the cytochrome b6f complex"/>
    <property type="match status" value="1"/>
</dbReference>
<keyword id="KW-0150">Chloroplast</keyword>
<keyword id="KW-0249">Electron transport</keyword>
<keyword id="KW-0472">Membrane</keyword>
<keyword id="KW-0602">Photosynthesis</keyword>
<keyword id="KW-0934">Plastid</keyword>
<keyword id="KW-0793">Thylakoid</keyword>
<keyword id="KW-0812">Transmembrane</keyword>
<keyword id="KW-1133">Transmembrane helix</keyword>
<keyword id="KW-0813">Transport</keyword>
<organism>
    <name type="scientific">Oenothera argillicola</name>
    <name type="common">Appalachian evening primrose</name>
    <dbReference type="NCBI Taxonomy" id="3940"/>
    <lineage>
        <taxon>Eukaryota</taxon>
        <taxon>Viridiplantae</taxon>
        <taxon>Streptophyta</taxon>
        <taxon>Embryophyta</taxon>
        <taxon>Tracheophyta</taxon>
        <taxon>Spermatophyta</taxon>
        <taxon>Magnoliopsida</taxon>
        <taxon>eudicotyledons</taxon>
        <taxon>Gunneridae</taxon>
        <taxon>Pentapetalae</taxon>
        <taxon>rosids</taxon>
        <taxon>malvids</taxon>
        <taxon>Myrtales</taxon>
        <taxon>Onagraceae</taxon>
        <taxon>Onagroideae</taxon>
        <taxon>Onagreae</taxon>
        <taxon>Oenothera</taxon>
    </lineage>
</organism>
<sequence>MIEVFLFGIVLGLIPITLAGLFVTAYLQYRRGDQLDL</sequence>
<name>PETG_OENAR</name>
<geneLocation type="chloroplast"/>
<evidence type="ECO:0000255" key="1">
    <source>
        <dbReference type="HAMAP-Rule" id="MF_00432"/>
    </source>
</evidence>